<name>NUOH_RHILO</name>
<keyword id="KW-0997">Cell inner membrane</keyword>
<keyword id="KW-1003">Cell membrane</keyword>
<keyword id="KW-0472">Membrane</keyword>
<keyword id="KW-0520">NAD</keyword>
<keyword id="KW-0874">Quinone</keyword>
<keyword id="KW-1278">Translocase</keyword>
<keyword id="KW-0812">Transmembrane</keyword>
<keyword id="KW-1133">Transmembrane helix</keyword>
<keyword id="KW-0830">Ubiquinone</keyword>
<accession>Q98KR3</accession>
<reference key="1">
    <citation type="journal article" date="2000" name="DNA Res.">
        <title>Complete genome structure of the nitrogen-fixing symbiotic bacterium Mesorhizobium loti.</title>
        <authorList>
            <person name="Kaneko T."/>
            <person name="Nakamura Y."/>
            <person name="Sato S."/>
            <person name="Asamizu E."/>
            <person name="Kato T."/>
            <person name="Sasamoto S."/>
            <person name="Watanabe A."/>
            <person name="Idesawa K."/>
            <person name="Ishikawa A."/>
            <person name="Kawashima K."/>
            <person name="Kimura T."/>
            <person name="Kishida Y."/>
            <person name="Kiyokawa C."/>
            <person name="Kohara M."/>
            <person name="Matsumoto M."/>
            <person name="Matsuno A."/>
            <person name="Mochizuki Y."/>
            <person name="Nakayama S."/>
            <person name="Nakazaki N."/>
            <person name="Shimpo S."/>
            <person name="Sugimoto M."/>
            <person name="Takeuchi C."/>
            <person name="Yamada M."/>
            <person name="Tabata S."/>
        </authorList>
    </citation>
    <scope>NUCLEOTIDE SEQUENCE [LARGE SCALE GENOMIC DNA]</scope>
    <source>
        <strain>LMG 29417 / CECT 9101 / MAFF 303099</strain>
    </source>
</reference>
<proteinExistence type="inferred from homology"/>
<comment type="function">
    <text evidence="1">NDH-1 shuttles electrons from NADH, via FMN and iron-sulfur (Fe-S) centers, to quinones in the respiratory chain. The immediate electron acceptor for the enzyme in this species is believed to be ubiquinone. Couples the redox reaction to proton translocation (for every two electrons transferred, four hydrogen ions are translocated across the cytoplasmic membrane), and thus conserves the redox energy in a proton gradient. This subunit may bind ubiquinone.</text>
</comment>
<comment type="catalytic activity">
    <reaction evidence="1">
        <text>a quinone + NADH + 5 H(+)(in) = a quinol + NAD(+) + 4 H(+)(out)</text>
        <dbReference type="Rhea" id="RHEA:57888"/>
        <dbReference type="ChEBI" id="CHEBI:15378"/>
        <dbReference type="ChEBI" id="CHEBI:24646"/>
        <dbReference type="ChEBI" id="CHEBI:57540"/>
        <dbReference type="ChEBI" id="CHEBI:57945"/>
        <dbReference type="ChEBI" id="CHEBI:132124"/>
    </reaction>
</comment>
<comment type="subunit">
    <text evidence="1">NDH-1 is composed of 14 different subunits. Subunits NuoA, H, J, K, L, M, N constitute the membrane sector of the complex.</text>
</comment>
<comment type="subcellular location">
    <subcellularLocation>
        <location evidence="1">Cell inner membrane</location>
        <topology evidence="1">Multi-pass membrane protein</topology>
    </subcellularLocation>
</comment>
<comment type="similarity">
    <text evidence="1">Belongs to the complex I subunit 1 family.</text>
</comment>
<feature type="chain" id="PRO_0000244937" description="NADH-quinone oxidoreductase subunit H">
    <location>
        <begin position="1"/>
        <end position="347"/>
    </location>
</feature>
<feature type="transmembrane region" description="Helical" evidence="1">
    <location>
        <begin position="13"/>
        <end position="33"/>
    </location>
</feature>
<feature type="transmembrane region" description="Helical" evidence="1">
    <location>
        <begin position="82"/>
        <end position="102"/>
    </location>
</feature>
<feature type="transmembrane region" description="Helical" evidence="1">
    <location>
        <begin position="115"/>
        <end position="135"/>
    </location>
</feature>
<feature type="transmembrane region" description="Helical" evidence="1">
    <location>
        <begin position="161"/>
        <end position="181"/>
    </location>
</feature>
<feature type="transmembrane region" description="Helical" evidence="1">
    <location>
        <begin position="198"/>
        <end position="218"/>
    </location>
</feature>
<feature type="transmembrane region" description="Helical" evidence="1">
    <location>
        <begin position="248"/>
        <end position="268"/>
    </location>
</feature>
<feature type="transmembrane region" description="Helical" evidence="1">
    <location>
        <begin position="283"/>
        <end position="303"/>
    </location>
</feature>
<feature type="transmembrane region" description="Helical" evidence="1">
    <location>
        <begin position="321"/>
        <end position="341"/>
    </location>
</feature>
<protein>
    <recommendedName>
        <fullName evidence="1">NADH-quinone oxidoreductase subunit H</fullName>
        <ecNumber evidence="1">7.1.1.-</ecNumber>
    </recommendedName>
    <alternativeName>
        <fullName evidence="1">NADH dehydrogenase I subunit H</fullName>
    </alternativeName>
    <alternativeName>
        <fullName evidence="1">NDH-1 subunit H</fullName>
    </alternativeName>
</protein>
<evidence type="ECO:0000255" key="1">
    <source>
        <dbReference type="HAMAP-Rule" id="MF_01350"/>
    </source>
</evidence>
<organism>
    <name type="scientific">Mesorhizobium japonicum (strain LMG 29417 / CECT 9101 / MAFF 303099)</name>
    <name type="common">Mesorhizobium loti (strain MAFF 303099)</name>
    <dbReference type="NCBI Taxonomy" id="266835"/>
    <lineage>
        <taxon>Bacteria</taxon>
        <taxon>Pseudomonadati</taxon>
        <taxon>Pseudomonadota</taxon>
        <taxon>Alphaproteobacteria</taxon>
        <taxon>Hyphomicrobiales</taxon>
        <taxon>Phyllobacteriaceae</taxon>
        <taxon>Mesorhizobium</taxon>
    </lineage>
</organism>
<sequence length="347" mass="38371">MDTFFSFYVLPALLILLKSVVLIVVLLIFVAYILYADRKIWAAVQLRRGPNVVGPWGTLQAFADLLKFVFKEPVIPSGANKGVFLLAPLVSAVLAISAWAVIPVNQGWAIANVNVGILYVFAISSLEVYGVIMGGWASNSKYPFLGALRSAAQMVSYEVSIGFVIVTVLLTAGSLNLSDIVLSQHDGIGTRLGLPNTFLDWNWLALFPMFIIFFISALAETNRPPFDLVEAESELVAGHMVEYSSTPFLLFFLGEYVAIVLMCALATILFLGGWLPPFDFVPFTWVPGVIWFVLKVCFVFFGISMVKAFVPRYRYDQLMRLGWKVFLPISLFMVVATAAFLKITGFA</sequence>
<gene>
    <name evidence="1" type="primary">nuoH</name>
    <name type="ordered locus">mll1361</name>
</gene>
<dbReference type="EC" id="7.1.1.-" evidence="1"/>
<dbReference type="EMBL" id="BA000012">
    <property type="protein sequence ID" value="BAB48751.1"/>
    <property type="molecule type" value="Genomic_DNA"/>
</dbReference>
<dbReference type="RefSeq" id="WP_010910104.1">
    <property type="nucleotide sequence ID" value="NC_002678.2"/>
</dbReference>
<dbReference type="SMR" id="Q98KR3"/>
<dbReference type="KEGG" id="mlo:mll1361"/>
<dbReference type="PATRIC" id="fig|266835.9.peg.1096"/>
<dbReference type="eggNOG" id="COG1005">
    <property type="taxonomic scope" value="Bacteria"/>
</dbReference>
<dbReference type="HOGENOM" id="CLU_015134_0_1_5"/>
<dbReference type="Proteomes" id="UP000000552">
    <property type="component" value="Chromosome"/>
</dbReference>
<dbReference type="GO" id="GO:0005886">
    <property type="term" value="C:plasma membrane"/>
    <property type="evidence" value="ECO:0007669"/>
    <property type="project" value="UniProtKB-SubCell"/>
</dbReference>
<dbReference type="GO" id="GO:0003954">
    <property type="term" value="F:NADH dehydrogenase activity"/>
    <property type="evidence" value="ECO:0007669"/>
    <property type="project" value="TreeGrafter"/>
</dbReference>
<dbReference type="GO" id="GO:0016655">
    <property type="term" value="F:oxidoreductase activity, acting on NAD(P)H, quinone or similar compound as acceptor"/>
    <property type="evidence" value="ECO:0007669"/>
    <property type="project" value="UniProtKB-UniRule"/>
</dbReference>
<dbReference type="GO" id="GO:0048038">
    <property type="term" value="F:quinone binding"/>
    <property type="evidence" value="ECO:0007669"/>
    <property type="project" value="UniProtKB-KW"/>
</dbReference>
<dbReference type="GO" id="GO:0009060">
    <property type="term" value="P:aerobic respiration"/>
    <property type="evidence" value="ECO:0007669"/>
    <property type="project" value="TreeGrafter"/>
</dbReference>
<dbReference type="HAMAP" id="MF_01350">
    <property type="entry name" value="NDH1_NuoH"/>
    <property type="match status" value="1"/>
</dbReference>
<dbReference type="InterPro" id="IPR001694">
    <property type="entry name" value="NADH_UbQ_OxRdtase_su1/FPO"/>
</dbReference>
<dbReference type="InterPro" id="IPR018086">
    <property type="entry name" value="NADH_UbQ_OxRdtase_su1_CS"/>
</dbReference>
<dbReference type="NCBIfam" id="NF004741">
    <property type="entry name" value="PRK06076.1-2"/>
    <property type="match status" value="1"/>
</dbReference>
<dbReference type="NCBIfam" id="NF004745">
    <property type="entry name" value="PRK06076.1-6"/>
    <property type="match status" value="1"/>
</dbReference>
<dbReference type="PANTHER" id="PTHR11432">
    <property type="entry name" value="NADH DEHYDROGENASE SUBUNIT 1"/>
    <property type="match status" value="1"/>
</dbReference>
<dbReference type="PANTHER" id="PTHR11432:SF3">
    <property type="entry name" value="NADH-UBIQUINONE OXIDOREDUCTASE CHAIN 1"/>
    <property type="match status" value="1"/>
</dbReference>
<dbReference type="Pfam" id="PF00146">
    <property type="entry name" value="NADHdh"/>
    <property type="match status" value="1"/>
</dbReference>
<dbReference type="PROSITE" id="PS00668">
    <property type="entry name" value="COMPLEX1_ND1_2"/>
    <property type="match status" value="1"/>
</dbReference>